<comment type="catalytic activity">
    <reaction evidence="1">
        <text>L-citrulline + L-aspartate + ATP = 2-(N(omega)-L-arginino)succinate + AMP + diphosphate + H(+)</text>
        <dbReference type="Rhea" id="RHEA:10932"/>
        <dbReference type="ChEBI" id="CHEBI:15378"/>
        <dbReference type="ChEBI" id="CHEBI:29991"/>
        <dbReference type="ChEBI" id="CHEBI:30616"/>
        <dbReference type="ChEBI" id="CHEBI:33019"/>
        <dbReference type="ChEBI" id="CHEBI:57472"/>
        <dbReference type="ChEBI" id="CHEBI:57743"/>
        <dbReference type="ChEBI" id="CHEBI:456215"/>
        <dbReference type="EC" id="6.3.4.5"/>
    </reaction>
</comment>
<comment type="pathway">
    <text evidence="1">Amino-acid biosynthesis; L-arginine biosynthesis; L-arginine from L-ornithine and carbamoyl phosphate: step 2/3.</text>
</comment>
<comment type="subunit">
    <text evidence="1">Homotetramer.</text>
</comment>
<comment type="subcellular location">
    <subcellularLocation>
        <location evidence="1">Cytoplasm</location>
    </subcellularLocation>
</comment>
<comment type="similarity">
    <text evidence="1">Belongs to the argininosuccinate synthase family. Type 2 subfamily.</text>
</comment>
<organism>
    <name type="scientific">Escherichia coli O127:H6 (strain E2348/69 / EPEC)</name>
    <dbReference type="NCBI Taxonomy" id="574521"/>
    <lineage>
        <taxon>Bacteria</taxon>
        <taxon>Pseudomonadati</taxon>
        <taxon>Pseudomonadota</taxon>
        <taxon>Gammaproteobacteria</taxon>
        <taxon>Enterobacterales</taxon>
        <taxon>Enterobacteriaceae</taxon>
        <taxon>Escherichia</taxon>
    </lineage>
</organism>
<keyword id="KW-0028">Amino-acid biosynthesis</keyword>
<keyword id="KW-0055">Arginine biosynthesis</keyword>
<keyword id="KW-0067">ATP-binding</keyword>
<keyword id="KW-0963">Cytoplasm</keyword>
<keyword id="KW-0436">Ligase</keyword>
<keyword id="KW-0547">Nucleotide-binding</keyword>
<keyword id="KW-1185">Reference proteome</keyword>
<name>ASSY_ECO27</name>
<accession>B7UJ66</accession>
<dbReference type="EC" id="6.3.4.5" evidence="1"/>
<dbReference type="EMBL" id="FM180568">
    <property type="protein sequence ID" value="CAS11000.1"/>
    <property type="molecule type" value="Genomic_DNA"/>
</dbReference>
<dbReference type="RefSeq" id="WP_000207663.1">
    <property type="nucleotide sequence ID" value="NC_011601.1"/>
</dbReference>
<dbReference type="SMR" id="B7UJ66"/>
<dbReference type="KEGG" id="ecg:E2348C_3452"/>
<dbReference type="HOGENOM" id="CLU_032784_4_1_6"/>
<dbReference type="UniPathway" id="UPA00068">
    <property type="reaction ID" value="UER00113"/>
</dbReference>
<dbReference type="Proteomes" id="UP000008205">
    <property type="component" value="Chromosome"/>
</dbReference>
<dbReference type="GO" id="GO:0005737">
    <property type="term" value="C:cytoplasm"/>
    <property type="evidence" value="ECO:0007669"/>
    <property type="project" value="UniProtKB-SubCell"/>
</dbReference>
<dbReference type="GO" id="GO:0004055">
    <property type="term" value="F:argininosuccinate synthase activity"/>
    <property type="evidence" value="ECO:0007669"/>
    <property type="project" value="UniProtKB-UniRule"/>
</dbReference>
<dbReference type="GO" id="GO:0005524">
    <property type="term" value="F:ATP binding"/>
    <property type="evidence" value="ECO:0007669"/>
    <property type="project" value="UniProtKB-UniRule"/>
</dbReference>
<dbReference type="GO" id="GO:0042803">
    <property type="term" value="F:protein homodimerization activity"/>
    <property type="evidence" value="ECO:0007669"/>
    <property type="project" value="InterPro"/>
</dbReference>
<dbReference type="GO" id="GO:0000053">
    <property type="term" value="P:argininosuccinate metabolic process"/>
    <property type="evidence" value="ECO:0007669"/>
    <property type="project" value="TreeGrafter"/>
</dbReference>
<dbReference type="GO" id="GO:0006526">
    <property type="term" value="P:L-arginine biosynthetic process"/>
    <property type="evidence" value="ECO:0007669"/>
    <property type="project" value="UniProtKB-UniRule"/>
</dbReference>
<dbReference type="GO" id="GO:0000050">
    <property type="term" value="P:urea cycle"/>
    <property type="evidence" value="ECO:0007669"/>
    <property type="project" value="TreeGrafter"/>
</dbReference>
<dbReference type="CDD" id="cd01999">
    <property type="entry name" value="ASS"/>
    <property type="match status" value="1"/>
</dbReference>
<dbReference type="FunFam" id="1.10.287.400:FF:000001">
    <property type="entry name" value="Argininosuccinate synthase"/>
    <property type="match status" value="1"/>
</dbReference>
<dbReference type="Gene3D" id="1.10.287.400">
    <property type="match status" value="1"/>
</dbReference>
<dbReference type="Gene3D" id="3.90.1260.10">
    <property type="entry name" value="Argininosuccinate synthetase, chain A, domain 2"/>
    <property type="match status" value="1"/>
</dbReference>
<dbReference type="Gene3D" id="3.40.50.620">
    <property type="entry name" value="HUPs"/>
    <property type="match status" value="1"/>
</dbReference>
<dbReference type="HAMAP" id="MF_00581">
    <property type="entry name" value="Arg_succ_synth_type2"/>
    <property type="match status" value="1"/>
</dbReference>
<dbReference type="InterPro" id="IPR023437">
    <property type="entry name" value="Arg_succ_synth_type2_subfam"/>
</dbReference>
<dbReference type="InterPro" id="IPR048268">
    <property type="entry name" value="Arginosuc_syn_C"/>
</dbReference>
<dbReference type="InterPro" id="IPR048267">
    <property type="entry name" value="Arginosuc_syn_N"/>
</dbReference>
<dbReference type="InterPro" id="IPR001518">
    <property type="entry name" value="Arginosuc_synth"/>
</dbReference>
<dbReference type="InterPro" id="IPR018223">
    <property type="entry name" value="Arginosuc_synth_CS"/>
</dbReference>
<dbReference type="InterPro" id="IPR023434">
    <property type="entry name" value="Arginosuc_synth_type_1_subfam"/>
</dbReference>
<dbReference type="InterPro" id="IPR024074">
    <property type="entry name" value="AS_cat/multimer_dom_body"/>
</dbReference>
<dbReference type="InterPro" id="IPR024073">
    <property type="entry name" value="AS_multimer_C_tail"/>
</dbReference>
<dbReference type="InterPro" id="IPR014729">
    <property type="entry name" value="Rossmann-like_a/b/a_fold"/>
</dbReference>
<dbReference type="NCBIfam" id="TIGR00032">
    <property type="entry name" value="argG"/>
    <property type="match status" value="1"/>
</dbReference>
<dbReference type="NCBIfam" id="NF003779">
    <property type="entry name" value="PRK05370.1"/>
    <property type="match status" value="1"/>
</dbReference>
<dbReference type="PANTHER" id="PTHR11587">
    <property type="entry name" value="ARGININOSUCCINATE SYNTHASE"/>
    <property type="match status" value="1"/>
</dbReference>
<dbReference type="PANTHER" id="PTHR11587:SF2">
    <property type="entry name" value="ARGININOSUCCINATE SYNTHASE"/>
    <property type="match status" value="1"/>
</dbReference>
<dbReference type="Pfam" id="PF20979">
    <property type="entry name" value="Arginosuc_syn_C"/>
    <property type="match status" value="1"/>
</dbReference>
<dbReference type="Pfam" id="PF00764">
    <property type="entry name" value="Arginosuc_synth"/>
    <property type="match status" value="1"/>
</dbReference>
<dbReference type="SUPFAM" id="SSF52402">
    <property type="entry name" value="Adenine nucleotide alpha hydrolases-like"/>
    <property type="match status" value="1"/>
</dbReference>
<dbReference type="SUPFAM" id="SSF69864">
    <property type="entry name" value="Argininosuccinate synthetase, C-terminal domain"/>
    <property type="match status" value="1"/>
</dbReference>
<dbReference type="PROSITE" id="PS00564">
    <property type="entry name" value="ARGININOSUCCIN_SYN_1"/>
    <property type="match status" value="1"/>
</dbReference>
<dbReference type="PROSITE" id="PS00565">
    <property type="entry name" value="ARGININOSUCCIN_SYN_2"/>
    <property type="match status" value="1"/>
</dbReference>
<gene>
    <name evidence="1" type="primary">argG</name>
    <name type="ordered locus">E2348C_3452</name>
</gene>
<feature type="chain" id="PRO_1000146929" description="Argininosuccinate synthase">
    <location>
        <begin position="1"/>
        <end position="447"/>
    </location>
</feature>
<feature type="binding site" evidence="1">
    <location>
        <begin position="17"/>
        <end position="25"/>
    </location>
    <ligand>
        <name>ATP</name>
        <dbReference type="ChEBI" id="CHEBI:30616"/>
    </ligand>
</feature>
<feature type="binding site" evidence="1">
    <location>
        <position position="43"/>
    </location>
    <ligand>
        <name>ATP</name>
        <dbReference type="ChEBI" id="CHEBI:30616"/>
    </ligand>
</feature>
<feature type="binding site" evidence="1">
    <location>
        <position position="99"/>
    </location>
    <ligand>
        <name>L-citrulline</name>
        <dbReference type="ChEBI" id="CHEBI:57743"/>
    </ligand>
</feature>
<feature type="binding site" evidence="1">
    <location>
        <position position="129"/>
    </location>
    <ligand>
        <name>ATP</name>
        <dbReference type="ChEBI" id="CHEBI:30616"/>
    </ligand>
</feature>
<feature type="binding site" evidence="1">
    <location>
        <position position="131"/>
    </location>
    <ligand>
        <name>ATP</name>
        <dbReference type="ChEBI" id="CHEBI:30616"/>
    </ligand>
</feature>
<feature type="binding site" evidence="1">
    <location>
        <position position="131"/>
    </location>
    <ligand>
        <name>L-aspartate</name>
        <dbReference type="ChEBI" id="CHEBI:29991"/>
    </ligand>
</feature>
<feature type="binding site" evidence="1">
    <location>
        <position position="135"/>
    </location>
    <ligand>
        <name>L-aspartate</name>
        <dbReference type="ChEBI" id="CHEBI:29991"/>
    </ligand>
</feature>
<feature type="binding site" evidence="1">
    <location>
        <position position="135"/>
    </location>
    <ligand>
        <name>L-citrulline</name>
        <dbReference type="ChEBI" id="CHEBI:57743"/>
    </ligand>
</feature>
<feature type="binding site" evidence="1">
    <location>
        <position position="136"/>
    </location>
    <ligand>
        <name>ATP</name>
        <dbReference type="ChEBI" id="CHEBI:30616"/>
    </ligand>
</feature>
<feature type="binding site" evidence="1">
    <location>
        <position position="136"/>
    </location>
    <ligand>
        <name>L-aspartate</name>
        <dbReference type="ChEBI" id="CHEBI:29991"/>
    </ligand>
</feature>
<feature type="binding site" evidence="1">
    <location>
        <position position="139"/>
    </location>
    <ligand>
        <name>L-citrulline</name>
        <dbReference type="ChEBI" id="CHEBI:57743"/>
    </ligand>
</feature>
<feature type="binding site" evidence="1">
    <location>
        <position position="192"/>
    </location>
    <ligand>
        <name>L-citrulline</name>
        <dbReference type="ChEBI" id="CHEBI:57743"/>
    </ligand>
</feature>
<feature type="binding site" evidence="1">
    <location>
        <position position="194"/>
    </location>
    <ligand>
        <name>ATP</name>
        <dbReference type="ChEBI" id="CHEBI:30616"/>
    </ligand>
</feature>
<feature type="binding site" evidence="1">
    <location>
        <position position="201"/>
    </location>
    <ligand>
        <name>L-citrulline</name>
        <dbReference type="ChEBI" id="CHEBI:57743"/>
    </ligand>
</feature>
<feature type="binding site" evidence="1">
    <location>
        <position position="203"/>
    </location>
    <ligand>
        <name>L-citrulline</name>
        <dbReference type="ChEBI" id="CHEBI:57743"/>
    </ligand>
</feature>
<feature type="binding site" evidence="1">
    <location>
        <position position="280"/>
    </location>
    <ligand>
        <name>L-citrulline</name>
        <dbReference type="ChEBI" id="CHEBI:57743"/>
    </ligand>
</feature>
<proteinExistence type="inferred from homology"/>
<protein>
    <recommendedName>
        <fullName evidence="1">Argininosuccinate synthase</fullName>
        <ecNumber evidence="1">6.3.4.5</ecNumber>
    </recommendedName>
    <alternativeName>
        <fullName evidence="1">Citrulline--aspartate ligase</fullName>
    </alternativeName>
</protein>
<sequence length="447" mass="49884">MTTILKHLPVGQRIGIAFSGGLDTSAALLWMRQKGAVPYAYTANLGQPDEEDYDAIPRRAMEYGAENARLIDCRKQLVAEGIAAIQCGAFHNTTGGLTYFNTTPLGRAVSGTMLVAAMKEDGVNIWGDGSTYKGNDIERFYRYGLLTNAELQIYKPWLDTDFIDELGGRHEMSEFMIACGFDYKMSVEKAYSTDSNMLGATHEAKDLEYLNSSVKIVNPIMGVKFWDESVKIPAEEVTVRFEQGHPVALNGKTFSDDVEMMLEANRIGGRHGLGMSDQIENRIIEAKSRGIYEAPGMALLHIAYERLLTGIHNEDTIEQYHAHGRQLGRLLYQGRWFDSQALMLRDSLQRWVASQITGEVTLELRRGNDYSILNTVSENLTYKPERLTMEKGDSVFSPDDRIGQLTMRNLDITDTREKLFGYAKTGLLSSSAASGVPQVENLENKGQ</sequence>
<reference key="1">
    <citation type="journal article" date="2009" name="J. Bacteriol.">
        <title>Complete genome sequence and comparative genome analysis of enteropathogenic Escherichia coli O127:H6 strain E2348/69.</title>
        <authorList>
            <person name="Iguchi A."/>
            <person name="Thomson N.R."/>
            <person name="Ogura Y."/>
            <person name="Saunders D."/>
            <person name="Ooka T."/>
            <person name="Henderson I.R."/>
            <person name="Harris D."/>
            <person name="Asadulghani M."/>
            <person name="Kurokawa K."/>
            <person name="Dean P."/>
            <person name="Kenny B."/>
            <person name="Quail M.A."/>
            <person name="Thurston S."/>
            <person name="Dougan G."/>
            <person name="Hayashi T."/>
            <person name="Parkhill J."/>
            <person name="Frankel G."/>
        </authorList>
    </citation>
    <scope>NUCLEOTIDE SEQUENCE [LARGE SCALE GENOMIC DNA]</scope>
    <source>
        <strain>E2348/69 / EPEC</strain>
    </source>
</reference>
<evidence type="ECO:0000255" key="1">
    <source>
        <dbReference type="HAMAP-Rule" id="MF_00581"/>
    </source>
</evidence>